<accession>Q95M68</accession>
<accession>A4H1Z3</accession>
<protein>
    <recommendedName>
        <fullName>Beta-defensin 1</fullName>
        <shortName>BD-1</shortName>
    </recommendedName>
    <alternativeName>
        <fullName>Defensin, beta 1</fullName>
    </alternativeName>
</protein>
<dbReference type="EMBL" id="AY033750">
    <property type="protein sequence ID" value="AAK61461.1"/>
    <property type="molecule type" value="Genomic_DNA"/>
</dbReference>
<dbReference type="EMBL" id="AY033734">
    <property type="protein sequence ID" value="AAK61461.1"/>
    <property type="status" value="JOINED"/>
    <property type="molecule type" value="Genomic_DNA"/>
</dbReference>
<dbReference type="EMBL" id="AM410098">
    <property type="protein sequence ID" value="CAL68913.1"/>
    <property type="molecule type" value="Genomic_DNA"/>
</dbReference>
<dbReference type="RefSeq" id="XP_004046634.1">
    <property type="nucleotide sequence ID" value="XM_004046586.5"/>
</dbReference>
<dbReference type="SMR" id="Q95M68"/>
<dbReference type="FunCoup" id="Q95M68">
    <property type="interactions" value="61"/>
</dbReference>
<dbReference type="STRING" id="9593.ENSGGOP00000011433"/>
<dbReference type="Ensembl" id="ENSGGOT00000011766.3">
    <property type="protein sequence ID" value="ENSGGOP00000011433.2"/>
    <property type="gene ID" value="ENSGGOG00000011726.3"/>
</dbReference>
<dbReference type="GeneID" id="101148919"/>
<dbReference type="KEGG" id="ggo:101148919"/>
<dbReference type="CTD" id="1672"/>
<dbReference type="eggNOG" id="ENOG502TDMV">
    <property type="taxonomic scope" value="Eukaryota"/>
</dbReference>
<dbReference type="GeneTree" id="ENSGT00390000017014"/>
<dbReference type="HOGENOM" id="CLU_189296_1_0_1"/>
<dbReference type="InParanoid" id="Q95M68"/>
<dbReference type="OMA" id="SGKAKCC"/>
<dbReference type="OrthoDB" id="10010at9604"/>
<dbReference type="Proteomes" id="UP000001519">
    <property type="component" value="Chromosome 8"/>
</dbReference>
<dbReference type="Bgee" id="ENSGGOG00000011726">
    <property type="expression patterns" value="Expressed in adult mammalian kidney and 3 other cell types or tissues"/>
</dbReference>
<dbReference type="GO" id="GO:0005615">
    <property type="term" value="C:extracellular space"/>
    <property type="evidence" value="ECO:0000318"/>
    <property type="project" value="GO_Central"/>
</dbReference>
<dbReference type="GO" id="GO:0016020">
    <property type="term" value="C:membrane"/>
    <property type="evidence" value="ECO:0000250"/>
    <property type="project" value="UniProtKB"/>
</dbReference>
<dbReference type="GO" id="GO:1990742">
    <property type="term" value="C:microvesicle"/>
    <property type="evidence" value="ECO:0000250"/>
    <property type="project" value="UniProtKB"/>
</dbReference>
<dbReference type="GO" id="GO:0097225">
    <property type="term" value="C:sperm midpiece"/>
    <property type="evidence" value="ECO:0000250"/>
    <property type="project" value="UniProtKB"/>
</dbReference>
<dbReference type="GO" id="GO:0031731">
    <property type="term" value="F:CCR6 chemokine receptor binding"/>
    <property type="evidence" value="ECO:0000250"/>
    <property type="project" value="UniProtKB"/>
</dbReference>
<dbReference type="GO" id="GO:0042802">
    <property type="term" value="F:identical protein binding"/>
    <property type="evidence" value="ECO:0000250"/>
    <property type="project" value="UniProtKB"/>
</dbReference>
<dbReference type="GO" id="GO:0019731">
    <property type="term" value="P:antibacterial humoral response"/>
    <property type="evidence" value="ECO:0007669"/>
    <property type="project" value="Ensembl"/>
</dbReference>
<dbReference type="GO" id="GO:0061844">
    <property type="term" value="P:antimicrobial humoral immune response mediated by antimicrobial peptide"/>
    <property type="evidence" value="ECO:0007669"/>
    <property type="project" value="Ensembl"/>
</dbReference>
<dbReference type="GO" id="GO:0019722">
    <property type="term" value="P:calcium-mediated signaling"/>
    <property type="evidence" value="ECO:0000250"/>
    <property type="project" value="UniProtKB"/>
</dbReference>
<dbReference type="GO" id="GO:0050829">
    <property type="term" value="P:defense response to Gram-negative bacterium"/>
    <property type="evidence" value="ECO:0000250"/>
    <property type="project" value="UniProtKB"/>
</dbReference>
<dbReference type="GO" id="GO:0050830">
    <property type="term" value="P:defense response to Gram-positive bacterium"/>
    <property type="evidence" value="ECO:0000250"/>
    <property type="project" value="UniProtKB"/>
</dbReference>
<dbReference type="GO" id="GO:0002227">
    <property type="term" value="P:innate immune response in mucosa"/>
    <property type="evidence" value="ECO:0000318"/>
    <property type="project" value="GO_Central"/>
</dbReference>
<dbReference type="GO" id="GO:0060474">
    <property type="term" value="P:positive regulation of flagellated sperm motility involved in capacitation"/>
    <property type="evidence" value="ECO:0000250"/>
    <property type="project" value="UniProtKB"/>
</dbReference>
<dbReference type="FunFam" id="3.10.360.10:FF:000001">
    <property type="entry name" value="Beta-defensin 1"/>
    <property type="match status" value="1"/>
</dbReference>
<dbReference type="Gene3D" id="3.10.360.10">
    <property type="entry name" value="Antimicrobial Peptide, Beta-defensin 2, Chain A"/>
    <property type="match status" value="1"/>
</dbReference>
<dbReference type="InterPro" id="IPR001855">
    <property type="entry name" value="Defensin_beta-like"/>
</dbReference>
<dbReference type="PANTHER" id="PTHR21388:SF9">
    <property type="entry name" value="BETA-DEFENSIN 1"/>
    <property type="match status" value="1"/>
</dbReference>
<dbReference type="PANTHER" id="PTHR21388">
    <property type="entry name" value="BETA-DEFENSIN-RELATED"/>
    <property type="match status" value="1"/>
</dbReference>
<dbReference type="Pfam" id="PF00711">
    <property type="entry name" value="Defensin_beta"/>
    <property type="match status" value="1"/>
</dbReference>
<dbReference type="SUPFAM" id="SSF57392">
    <property type="entry name" value="Defensin-like"/>
    <property type="match status" value="1"/>
</dbReference>
<keyword id="KW-0044">Antibiotic</keyword>
<keyword id="KW-0929">Antimicrobial</keyword>
<keyword id="KW-0211">Defensin</keyword>
<keyword id="KW-1015">Disulfide bond</keyword>
<keyword id="KW-0472">Membrane</keyword>
<keyword id="KW-1185">Reference proteome</keyword>
<keyword id="KW-0964">Secreted</keyword>
<keyword id="KW-0732">Signal</keyword>
<sequence>MRTSYLLLFTLCLLLSEIASGGNFLTGLGHRSDHYNCVSSGGQCLYSACPIFTKIQGTCYGGKAKCCK</sequence>
<proteinExistence type="inferred from homology"/>
<comment type="function">
    <text evidence="2">Has bactericidal activity. May act as a ligand for C-C chemokine receptor CCR6. Positively regulates the sperm motility and bactericidal activity in a CCR6-dependent manner. Binds to CCR6 and triggers Ca2+ mobilization in the sperm which is important for its motility.</text>
</comment>
<comment type="subunit">
    <text evidence="2">Monomer. Homodimer.</text>
</comment>
<comment type="subcellular location">
    <subcellularLocation>
        <location evidence="2">Secreted</location>
    </subcellularLocation>
    <subcellularLocation>
        <location evidence="2">Membrane</location>
    </subcellularLocation>
    <text evidence="2">Associates with tumor cell membrane-derived microvesicles.</text>
</comment>
<comment type="similarity">
    <text evidence="4">Belongs to the beta-defensin family.</text>
</comment>
<evidence type="ECO:0000250" key="1"/>
<evidence type="ECO:0000250" key="2">
    <source>
        <dbReference type="UniProtKB" id="P60022"/>
    </source>
</evidence>
<evidence type="ECO:0000255" key="3"/>
<evidence type="ECO:0000305" key="4"/>
<name>DEFB1_GORGO</name>
<reference key="1">
    <citation type="journal article" date="2002" name="Immunogenetics">
        <title>Beta-defensin 1 gene variability among non-human primates.</title>
        <authorList>
            <person name="Del Pero M."/>
            <person name="Boniotto M."/>
            <person name="Zuccon D."/>
            <person name="Cervella P."/>
            <person name="Spano A."/>
            <person name="Amoroso A."/>
            <person name="Crovella S."/>
        </authorList>
    </citation>
    <scope>NUCLEOTIDE SEQUENCE [GENOMIC DNA]</scope>
</reference>
<reference key="2">
    <citation type="submission" date="2006-11" db="EMBL/GenBank/DDBJ databases">
        <title>Evolution and sequence variation of human beta-defensin genes.</title>
        <authorList>
            <person name="Hollox E.J."/>
            <person name="Armour J.A.L."/>
        </authorList>
    </citation>
    <scope>NUCLEOTIDE SEQUENCE [GENOMIC DNA]</scope>
</reference>
<gene>
    <name type="primary">DEFB1</name>
</gene>
<feature type="signal peptide" evidence="3">
    <location>
        <begin position="1"/>
        <end position="21"/>
    </location>
</feature>
<feature type="propeptide" id="PRO_0000006897" evidence="1">
    <location>
        <begin position="22"/>
        <end position="32"/>
    </location>
</feature>
<feature type="peptide" id="PRO_0000006898" description="Beta-defensin 1">
    <location>
        <begin position="33"/>
        <end position="68"/>
    </location>
</feature>
<feature type="disulfide bond" evidence="1">
    <location>
        <begin position="37"/>
        <end position="66"/>
    </location>
</feature>
<feature type="disulfide bond" evidence="1">
    <location>
        <begin position="44"/>
        <end position="59"/>
    </location>
</feature>
<feature type="disulfide bond" evidence="1">
    <location>
        <begin position="49"/>
        <end position="67"/>
    </location>
</feature>
<organism>
    <name type="scientific">Gorilla gorilla gorilla</name>
    <name type="common">Western lowland gorilla</name>
    <dbReference type="NCBI Taxonomy" id="9595"/>
    <lineage>
        <taxon>Eukaryota</taxon>
        <taxon>Metazoa</taxon>
        <taxon>Chordata</taxon>
        <taxon>Craniata</taxon>
        <taxon>Vertebrata</taxon>
        <taxon>Euteleostomi</taxon>
        <taxon>Mammalia</taxon>
        <taxon>Eutheria</taxon>
        <taxon>Euarchontoglires</taxon>
        <taxon>Primates</taxon>
        <taxon>Haplorrhini</taxon>
        <taxon>Catarrhini</taxon>
        <taxon>Hominidae</taxon>
        <taxon>Gorilla</taxon>
    </lineage>
</organism>